<reference key="1">
    <citation type="submission" date="2004-11" db="EMBL/GenBank/DDBJ databases">
        <authorList>
            <person name="Robertson L.J.G."/>
        </authorList>
    </citation>
    <scope>NUCLEOTIDE SEQUENCE [MRNA]</scope>
</reference>
<organism>
    <name type="scientific">Ovis aries</name>
    <name type="common">Sheep</name>
    <dbReference type="NCBI Taxonomy" id="9940"/>
    <lineage>
        <taxon>Eukaryota</taxon>
        <taxon>Metazoa</taxon>
        <taxon>Chordata</taxon>
        <taxon>Craniata</taxon>
        <taxon>Vertebrata</taxon>
        <taxon>Euteleostomi</taxon>
        <taxon>Mammalia</taxon>
        <taxon>Eutheria</taxon>
        <taxon>Laurasiatheria</taxon>
        <taxon>Artiodactyla</taxon>
        <taxon>Ruminantia</taxon>
        <taxon>Pecora</taxon>
        <taxon>Bovidae</taxon>
        <taxon>Caprinae</taxon>
        <taxon>Ovis</taxon>
    </lineage>
</organism>
<proteinExistence type="evidence at transcript level"/>
<gene>
    <name type="primary">CRYAA</name>
</gene>
<comment type="function">
    <text evidence="4">Contributes to the transparency and refractive index of the lens. Acts as a chaperone, preventing aggregation of various proteins under a wide range of stress conditions. Required for the correct formation of lens intermediate filaments as part of a complex composed of BFSP1, BFSP2 and CRYAA.</text>
</comment>
<comment type="subunit">
    <text evidence="2 4">Heteromer composed of three CRYAA and one CRYAB subunits. Inter-subunit bridging via zinc ions enhances stability, which is crucial as there is no protein turn over in the lens. Can also form homodimers and homotetramers (dimers of dimers) which serve as the building blocks of homooligomers (By similarity). Within homooligomers, the zinc-binding motif is created from residues of 3 different molecules. His-100 and Glu-102 from one molecule are ligands of the zinc ion, and His-107 and His-154 residues from additional molecules complete the site with tetrahedral coordination geometry (By similarity). Part of a complex required for lens intermediate filament formation composed of BFSP1, BFSP2 and CRYAA (By similarity).</text>
</comment>
<comment type="subcellular location">
    <subcellularLocation>
        <location evidence="4">Cytoplasm</location>
    </subcellularLocation>
    <subcellularLocation>
        <location evidence="4">Nucleus</location>
    </subcellularLocation>
    <text evidence="4">Translocates to the nucleus during heat shock and resides in sub-nuclear structures known as SC35 speckles or nuclear splicing speckles.</text>
</comment>
<comment type="PTM">
    <text evidence="4">Acetylation at Lys-70 may increase chaperone activity.</text>
</comment>
<comment type="PTM">
    <text evidence="4">Undergoes age-dependent proteolytical cleavage at the C-terminus.</text>
</comment>
<comment type="similarity">
    <text evidence="5">Belongs to the small heat shock protein (HSP20) family.</text>
</comment>
<protein>
    <recommendedName>
        <fullName>Alpha-crystallin A chain</fullName>
    </recommendedName>
</protein>
<accession>Q5ENZ0</accession>
<sequence length="173" mass="19776">MDIAIQHPWFKRTLGPFYPSRLFDQFFGEGLFEYDLLPFLSSTISPYYRQSLFRTVLDSGISEVRSDRDKFVIFLDVKHFSPEDLTVKVQEDFVEIHGKHNERQDDHGYISREFHRRYRLPSNVDQSALSCSLSADGMLTFSGPKVPSGVDAGHSERAIPVSREEKPSSAPSS</sequence>
<feature type="chain" id="PRO_0000125884" description="Alpha-crystallin A chain">
    <location>
        <begin position="1"/>
        <end position="173"/>
    </location>
</feature>
<feature type="domain" description="sHSP" evidence="5">
    <location>
        <begin position="52"/>
        <end position="162"/>
    </location>
</feature>
<feature type="region of interest" description="Required for complex formation with BFSP1 and BFSP2" evidence="4">
    <location>
        <begin position="1"/>
        <end position="63"/>
    </location>
</feature>
<feature type="region of interest" description="Disordered" evidence="6">
    <location>
        <begin position="144"/>
        <end position="173"/>
    </location>
</feature>
<feature type="compositionally biased region" description="Basic and acidic residues" evidence="6">
    <location>
        <begin position="153"/>
        <end position="167"/>
    </location>
</feature>
<feature type="binding site" evidence="2">
    <location>
        <position position="100"/>
    </location>
    <ligand>
        <name>Zn(2+)</name>
        <dbReference type="ChEBI" id="CHEBI:29105"/>
        <label>1</label>
    </ligand>
</feature>
<feature type="binding site" evidence="2">
    <location>
        <position position="102"/>
    </location>
    <ligand>
        <name>Zn(2+)</name>
        <dbReference type="ChEBI" id="CHEBI:29105"/>
        <label>1</label>
    </ligand>
</feature>
<feature type="binding site" evidence="2">
    <location>
        <position position="107"/>
    </location>
    <ligand>
        <name>Zn(2+)</name>
        <dbReference type="ChEBI" id="CHEBI:29105"/>
        <label>2</label>
    </ligand>
</feature>
<feature type="binding site" evidence="2">
    <location>
        <position position="154"/>
    </location>
    <ligand>
        <name>Zn(2+)</name>
        <dbReference type="ChEBI" id="CHEBI:29105"/>
        <label>3</label>
    </ligand>
</feature>
<feature type="modified residue" description="N-acetylmethionine" evidence="3">
    <location>
        <position position="1"/>
    </location>
</feature>
<feature type="modified residue" description="Deamidated glutamine; partial" evidence="1">
    <location>
        <position position="6"/>
    </location>
</feature>
<feature type="modified residue" description="Phosphoserine" evidence="4">
    <location>
        <position position="45"/>
    </location>
</feature>
<feature type="modified residue" description="Deamidated glutamine; partial" evidence="1">
    <location>
        <position position="50"/>
    </location>
</feature>
<feature type="modified residue" description="N6-acetyllysine" evidence="4">
    <location>
        <position position="70"/>
    </location>
</feature>
<feature type="modified residue" description="Deamidated glutamine; partial" evidence="1">
    <location>
        <position position="90"/>
    </location>
</feature>
<feature type="modified residue" description="N6-acetyllysine" evidence="4">
    <location>
        <position position="99"/>
    </location>
</feature>
<feature type="modified residue" description="Deamidated asparagine; partial" evidence="1">
    <location>
        <position position="101"/>
    </location>
</feature>
<feature type="modified residue" description="Phosphoserine" evidence="2">
    <location>
        <position position="122"/>
    </location>
</feature>
<feature type="modified residue" description="Deamidated asparagine; partial" evidence="1">
    <location>
        <position position="123"/>
    </location>
</feature>
<feature type="glycosylation site" description="O-linked (GlcNAc) serine" evidence="1">
    <location>
        <position position="162"/>
    </location>
</feature>
<keyword id="KW-0007">Acetylation</keyword>
<keyword id="KW-0143">Chaperone</keyword>
<keyword id="KW-0963">Cytoplasm</keyword>
<keyword id="KW-0273">Eye lens protein</keyword>
<keyword id="KW-0325">Glycoprotein</keyword>
<keyword id="KW-0479">Metal-binding</keyword>
<keyword id="KW-0488">Methylation</keyword>
<keyword id="KW-0539">Nucleus</keyword>
<keyword id="KW-0597">Phosphoprotein</keyword>
<keyword id="KW-1185">Reference proteome</keyword>
<keyword id="KW-0862">Zinc</keyword>
<name>CRYAA_SHEEP</name>
<dbReference type="EMBL" id="AY819022">
    <property type="protein sequence ID" value="AAW79078.1"/>
    <property type="molecule type" value="mRNA"/>
</dbReference>
<dbReference type="RefSeq" id="NP_001012476.1">
    <property type="nucleotide sequence ID" value="NM_001012458.1"/>
</dbReference>
<dbReference type="SMR" id="Q5ENZ0"/>
<dbReference type="STRING" id="9940.ENSOARP00000011991"/>
<dbReference type="GlyCosmos" id="Q5ENZ0">
    <property type="glycosylation" value="1 site, No reported glycans"/>
</dbReference>
<dbReference type="Ensembl" id="ENSOART00040027916">
    <property type="protein sequence ID" value="ENSOARP00040014373"/>
    <property type="gene ID" value="ENSOARG00040016884"/>
</dbReference>
<dbReference type="Ensembl" id="ENSOART00180016023">
    <property type="protein sequence ID" value="ENSOARP00180008213"/>
    <property type="gene ID" value="ENSOARG00180009737"/>
</dbReference>
<dbReference type="Ensembl" id="ENSOART00185038665">
    <property type="protein sequence ID" value="ENSOARP00185019030"/>
    <property type="gene ID" value="ENSOARG00185023513"/>
</dbReference>
<dbReference type="Ensembl" id="ENSOART00215010686">
    <property type="protein sequence ID" value="ENSOARP00215006265"/>
    <property type="gene ID" value="ENSOARG00215006130"/>
</dbReference>
<dbReference type="Ensembl" id="ENSOART00220011589">
    <property type="protein sequence ID" value="ENSOARP00220006827"/>
    <property type="gene ID" value="ENSOARG00220006872"/>
</dbReference>
<dbReference type="Ensembl" id="ENSOART00225089133">
    <property type="protein sequence ID" value="ENSOARP00225047214"/>
    <property type="gene ID" value="ENSOARG00225053414"/>
</dbReference>
<dbReference type="Ensembl" id="ENSOART00260003915">
    <property type="protein sequence ID" value="ENSOARP00260002118"/>
    <property type="gene ID" value="ENSOARG00260002323"/>
</dbReference>
<dbReference type="GeneID" id="497275"/>
<dbReference type="KEGG" id="oas:497275"/>
<dbReference type="CTD" id="1409"/>
<dbReference type="OrthoDB" id="1431247at2759"/>
<dbReference type="Proteomes" id="UP000002356">
    <property type="component" value="Unplaced"/>
</dbReference>
<dbReference type="GO" id="GO:0005737">
    <property type="term" value="C:cytoplasm"/>
    <property type="evidence" value="ECO:0000250"/>
    <property type="project" value="UniProtKB"/>
</dbReference>
<dbReference type="GO" id="GO:0005829">
    <property type="term" value="C:cytosol"/>
    <property type="evidence" value="ECO:0007669"/>
    <property type="project" value="Ensembl"/>
</dbReference>
<dbReference type="GO" id="GO:0005654">
    <property type="term" value="C:nucleoplasm"/>
    <property type="evidence" value="ECO:0007669"/>
    <property type="project" value="Ensembl"/>
</dbReference>
<dbReference type="GO" id="GO:0005634">
    <property type="term" value="C:nucleus"/>
    <property type="evidence" value="ECO:0000250"/>
    <property type="project" value="UniProtKB"/>
</dbReference>
<dbReference type="GO" id="GO:0032991">
    <property type="term" value="C:protein-containing complex"/>
    <property type="evidence" value="ECO:0007669"/>
    <property type="project" value="Ensembl"/>
</dbReference>
<dbReference type="GO" id="GO:0042802">
    <property type="term" value="F:identical protein binding"/>
    <property type="evidence" value="ECO:0007669"/>
    <property type="project" value="Ensembl"/>
</dbReference>
<dbReference type="GO" id="GO:0046872">
    <property type="term" value="F:metal ion binding"/>
    <property type="evidence" value="ECO:0007669"/>
    <property type="project" value="UniProtKB-KW"/>
</dbReference>
<dbReference type="GO" id="GO:0005212">
    <property type="term" value="F:structural constituent of eye lens"/>
    <property type="evidence" value="ECO:0007669"/>
    <property type="project" value="UniProtKB-KW"/>
</dbReference>
<dbReference type="GO" id="GO:0051082">
    <property type="term" value="F:unfolded protein binding"/>
    <property type="evidence" value="ECO:0007669"/>
    <property type="project" value="Ensembl"/>
</dbReference>
<dbReference type="GO" id="GO:0007015">
    <property type="term" value="P:actin filament organization"/>
    <property type="evidence" value="ECO:0007669"/>
    <property type="project" value="Ensembl"/>
</dbReference>
<dbReference type="GO" id="GO:0060561">
    <property type="term" value="P:apoptotic process involved in morphogenesis"/>
    <property type="evidence" value="ECO:0007669"/>
    <property type="project" value="Ensembl"/>
</dbReference>
<dbReference type="GO" id="GO:0048596">
    <property type="term" value="P:embryonic camera-type eye morphogenesis"/>
    <property type="evidence" value="ECO:0007669"/>
    <property type="project" value="Ensembl"/>
</dbReference>
<dbReference type="GO" id="GO:0070309">
    <property type="term" value="P:lens fiber cell morphogenesis"/>
    <property type="evidence" value="ECO:0007669"/>
    <property type="project" value="Ensembl"/>
</dbReference>
<dbReference type="GO" id="GO:0007017">
    <property type="term" value="P:microtubule-based process"/>
    <property type="evidence" value="ECO:0007669"/>
    <property type="project" value="Ensembl"/>
</dbReference>
<dbReference type="GO" id="GO:0007005">
    <property type="term" value="P:mitochondrion organization"/>
    <property type="evidence" value="ECO:0007669"/>
    <property type="project" value="Ensembl"/>
</dbReference>
<dbReference type="GO" id="GO:0043066">
    <property type="term" value="P:negative regulation of apoptotic process"/>
    <property type="evidence" value="ECO:0007669"/>
    <property type="project" value="Ensembl"/>
</dbReference>
<dbReference type="GO" id="GO:0010629">
    <property type="term" value="P:negative regulation of gene expression"/>
    <property type="evidence" value="ECO:0007669"/>
    <property type="project" value="Ensembl"/>
</dbReference>
<dbReference type="GO" id="GO:0032387">
    <property type="term" value="P:negative regulation of intracellular transport"/>
    <property type="evidence" value="ECO:0007669"/>
    <property type="project" value="Ensembl"/>
</dbReference>
<dbReference type="GO" id="GO:0030307">
    <property type="term" value="P:positive regulation of cell growth"/>
    <property type="evidence" value="ECO:0007669"/>
    <property type="project" value="Ensembl"/>
</dbReference>
<dbReference type="GO" id="GO:0042026">
    <property type="term" value="P:protein refolding"/>
    <property type="evidence" value="ECO:0007669"/>
    <property type="project" value="TreeGrafter"/>
</dbReference>
<dbReference type="GO" id="GO:0050821">
    <property type="term" value="P:protein stabilization"/>
    <property type="evidence" value="ECO:0007669"/>
    <property type="project" value="Ensembl"/>
</dbReference>
<dbReference type="GO" id="GO:0009408">
    <property type="term" value="P:response to heat"/>
    <property type="evidence" value="ECO:0007669"/>
    <property type="project" value="TreeGrafter"/>
</dbReference>
<dbReference type="GO" id="GO:0042542">
    <property type="term" value="P:response to hydrogen peroxide"/>
    <property type="evidence" value="ECO:0007669"/>
    <property type="project" value="Ensembl"/>
</dbReference>
<dbReference type="GO" id="GO:0001666">
    <property type="term" value="P:response to hypoxia"/>
    <property type="evidence" value="ECO:0007669"/>
    <property type="project" value="Ensembl"/>
</dbReference>
<dbReference type="GO" id="GO:0070141">
    <property type="term" value="P:response to UV-A"/>
    <property type="evidence" value="ECO:0007669"/>
    <property type="project" value="Ensembl"/>
</dbReference>
<dbReference type="GO" id="GO:0007021">
    <property type="term" value="P:tubulin complex assembly"/>
    <property type="evidence" value="ECO:0007669"/>
    <property type="project" value="Ensembl"/>
</dbReference>
<dbReference type="GO" id="GO:0007601">
    <property type="term" value="P:visual perception"/>
    <property type="evidence" value="ECO:0007669"/>
    <property type="project" value="Ensembl"/>
</dbReference>
<dbReference type="FunFam" id="2.60.40.790:FF:000008">
    <property type="entry name" value="Alpha-crystallin A chain"/>
    <property type="match status" value="1"/>
</dbReference>
<dbReference type="Gene3D" id="2.60.40.790">
    <property type="match status" value="1"/>
</dbReference>
<dbReference type="InterPro" id="IPR002068">
    <property type="entry name" value="A-crystallin/Hsp20_dom"/>
</dbReference>
<dbReference type="InterPro" id="IPR055269">
    <property type="entry name" value="Alpha-crystallin/HSP_16"/>
</dbReference>
<dbReference type="InterPro" id="IPR001436">
    <property type="entry name" value="Alpha-crystallin/sHSP_animal"/>
</dbReference>
<dbReference type="InterPro" id="IPR003090">
    <property type="entry name" value="Alpha-crystallin_N"/>
</dbReference>
<dbReference type="InterPro" id="IPR008978">
    <property type="entry name" value="HSP20-like_chaperone"/>
</dbReference>
<dbReference type="PANTHER" id="PTHR45640:SF14">
    <property type="entry name" value="ALPHA-CRYSTALLIN A CHAIN"/>
    <property type="match status" value="1"/>
</dbReference>
<dbReference type="PANTHER" id="PTHR45640">
    <property type="entry name" value="HEAT SHOCK PROTEIN HSP-12.2-RELATED"/>
    <property type="match status" value="1"/>
</dbReference>
<dbReference type="Pfam" id="PF00525">
    <property type="entry name" value="Crystallin"/>
    <property type="match status" value="1"/>
</dbReference>
<dbReference type="Pfam" id="PF00011">
    <property type="entry name" value="HSP20"/>
    <property type="match status" value="1"/>
</dbReference>
<dbReference type="PIRSF" id="PIRSF036514">
    <property type="entry name" value="Sm_HSP_B1"/>
    <property type="match status" value="1"/>
</dbReference>
<dbReference type="PRINTS" id="PR00299">
    <property type="entry name" value="ACRYSTALLIN"/>
</dbReference>
<dbReference type="SUPFAM" id="SSF49764">
    <property type="entry name" value="HSP20-like chaperones"/>
    <property type="match status" value="1"/>
</dbReference>
<dbReference type="PROSITE" id="PS01031">
    <property type="entry name" value="SHSP"/>
    <property type="match status" value="1"/>
</dbReference>
<evidence type="ECO:0000250" key="1"/>
<evidence type="ECO:0000250" key="2">
    <source>
        <dbReference type="UniProtKB" id="P02470"/>
    </source>
</evidence>
<evidence type="ECO:0000250" key="3">
    <source>
        <dbReference type="UniProtKB" id="P02474"/>
    </source>
</evidence>
<evidence type="ECO:0000250" key="4">
    <source>
        <dbReference type="UniProtKB" id="P02489"/>
    </source>
</evidence>
<evidence type="ECO:0000255" key="5">
    <source>
        <dbReference type="PROSITE-ProRule" id="PRU00285"/>
    </source>
</evidence>
<evidence type="ECO:0000256" key="6">
    <source>
        <dbReference type="SAM" id="MobiDB-lite"/>
    </source>
</evidence>